<protein>
    <recommendedName>
        <fullName evidence="1">Galactose/methyl galactoside import ATP-binding protein MglA</fullName>
        <ecNumber evidence="1">7.5.2.11</ecNumber>
    </recommendedName>
</protein>
<reference key="1">
    <citation type="journal article" date="2006" name="Genome Res.">
        <title>Skewed genomic variability in strains of the toxigenic bacterial pathogen, Clostridium perfringens.</title>
        <authorList>
            <person name="Myers G.S.A."/>
            <person name="Rasko D.A."/>
            <person name="Cheung J.K."/>
            <person name="Ravel J."/>
            <person name="Seshadri R."/>
            <person name="DeBoy R.T."/>
            <person name="Ren Q."/>
            <person name="Varga J."/>
            <person name="Awad M.M."/>
            <person name="Brinkac L.M."/>
            <person name="Daugherty S.C."/>
            <person name="Haft D.H."/>
            <person name="Dodson R.J."/>
            <person name="Madupu R."/>
            <person name="Nelson W.C."/>
            <person name="Rosovitz M.J."/>
            <person name="Sullivan S.A."/>
            <person name="Khouri H."/>
            <person name="Dimitrov G.I."/>
            <person name="Watkins K.L."/>
            <person name="Mulligan S."/>
            <person name="Benton J."/>
            <person name="Radune D."/>
            <person name="Fisher D.J."/>
            <person name="Atkins H.S."/>
            <person name="Hiscox T."/>
            <person name="Jost B.H."/>
            <person name="Billington S.J."/>
            <person name="Songer J.G."/>
            <person name="McClane B.A."/>
            <person name="Titball R.W."/>
            <person name="Rood J.I."/>
            <person name="Melville S.B."/>
            <person name="Paulsen I.T."/>
        </authorList>
    </citation>
    <scope>NUCLEOTIDE SEQUENCE [LARGE SCALE GENOMIC DNA]</scope>
    <source>
        <strain>ATCC 13124 / DSM 756 / JCM 1290 / NCIMB 6125 / NCTC 8237 / S 107 / Type A</strain>
    </source>
</reference>
<keyword id="KW-0067">ATP-binding</keyword>
<keyword id="KW-1003">Cell membrane</keyword>
<keyword id="KW-0472">Membrane</keyword>
<keyword id="KW-0547">Nucleotide-binding</keyword>
<keyword id="KW-0677">Repeat</keyword>
<keyword id="KW-0762">Sugar transport</keyword>
<keyword id="KW-1278">Translocase</keyword>
<keyword id="KW-0813">Transport</keyword>
<gene>
    <name evidence="1" type="primary">mglA</name>
    <name type="ordered locus">CPF_1549</name>
</gene>
<feature type="chain" id="PRO_0000261360" description="Galactose/methyl galactoside import ATP-binding protein MglA">
    <location>
        <begin position="1"/>
        <end position="515"/>
    </location>
</feature>
<feature type="domain" description="ABC transporter 1" evidence="1">
    <location>
        <begin position="8"/>
        <end position="243"/>
    </location>
</feature>
<feature type="domain" description="ABC transporter 2" evidence="1">
    <location>
        <begin position="254"/>
        <end position="499"/>
    </location>
</feature>
<feature type="binding site" evidence="1">
    <location>
        <begin position="40"/>
        <end position="47"/>
    </location>
    <ligand>
        <name>ATP</name>
        <dbReference type="ChEBI" id="CHEBI:30616"/>
    </ligand>
</feature>
<evidence type="ECO:0000255" key="1">
    <source>
        <dbReference type="HAMAP-Rule" id="MF_01717"/>
    </source>
</evidence>
<accession>Q0TQU8</accession>
<name>MGLA_CLOP1</name>
<dbReference type="EC" id="7.5.2.11" evidence="1"/>
<dbReference type="EMBL" id="CP000246">
    <property type="protein sequence ID" value="ABG82326.1"/>
    <property type="molecule type" value="Genomic_DNA"/>
</dbReference>
<dbReference type="RefSeq" id="WP_003449162.1">
    <property type="nucleotide sequence ID" value="NC_008261.1"/>
</dbReference>
<dbReference type="SMR" id="Q0TQU8"/>
<dbReference type="STRING" id="195103.CPF_1549"/>
<dbReference type="PaxDb" id="195103-CPF_1549"/>
<dbReference type="KEGG" id="cpf:CPF_1549"/>
<dbReference type="eggNOG" id="COG1129">
    <property type="taxonomic scope" value="Bacteria"/>
</dbReference>
<dbReference type="HOGENOM" id="CLU_000604_92_3_9"/>
<dbReference type="Proteomes" id="UP000001823">
    <property type="component" value="Chromosome"/>
</dbReference>
<dbReference type="GO" id="GO:0005886">
    <property type="term" value="C:plasma membrane"/>
    <property type="evidence" value="ECO:0007669"/>
    <property type="project" value="UniProtKB-SubCell"/>
</dbReference>
<dbReference type="GO" id="GO:0005524">
    <property type="term" value="F:ATP binding"/>
    <property type="evidence" value="ECO:0007669"/>
    <property type="project" value="UniProtKB-KW"/>
</dbReference>
<dbReference type="GO" id="GO:0016887">
    <property type="term" value="F:ATP hydrolysis activity"/>
    <property type="evidence" value="ECO:0007669"/>
    <property type="project" value="InterPro"/>
</dbReference>
<dbReference type="CDD" id="cd03216">
    <property type="entry name" value="ABC_Carb_Monos_I"/>
    <property type="match status" value="1"/>
</dbReference>
<dbReference type="CDD" id="cd03215">
    <property type="entry name" value="ABC_Carb_Monos_II"/>
    <property type="match status" value="1"/>
</dbReference>
<dbReference type="FunFam" id="3.40.50.300:FF:000126">
    <property type="entry name" value="Galactose/methyl galactoside import ATP-binding protein MglA"/>
    <property type="match status" value="1"/>
</dbReference>
<dbReference type="FunFam" id="3.40.50.300:FF:000127">
    <property type="entry name" value="Ribose import ATP-binding protein RbsA"/>
    <property type="match status" value="1"/>
</dbReference>
<dbReference type="Gene3D" id="3.40.50.300">
    <property type="entry name" value="P-loop containing nucleotide triphosphate hydrolases"/>
    <property type="match status" value="2"/>
</dbReference>
<dbReference type="InterPro" id="IPR003593">
    <property type="entry name" value="AAA+_ATPase"/>
</dbReference>
<dbReference type="InterPro" id="IPR050107">
    <property type="entry name" value="ABC_carbohydrate_import_ATPase"/>
</dbReference>
<dbReference type="InterPro" id="IPR003439">
    <property type="entry name" value="ABC_transporter-like_ATP-bd"/>
</dbReference>
<dbReference type="InterPro" id="IPR017871">
    <property type="entry name" value="ABC_transporter-like_CS"/>
</dbReference>
<dbReference type="InterPro" id="IPR027417">
    <property type="entry name" value="P-loop_NTPase"/>
</dbReference>
<dbReference type="NCBIfam" id="NF008215">
    <property type="entry name" value="PRK10982.1"/>
    <property type="match status" value="1"/>
</dbReference>
<dbReference type="PANTHER" id="PTHR43790">
    <property type="entry name" value="CARBOHYDRATE TRANSPORT ATP-BINDING PROTEIN MG119-RELATED"/>
    <property type="match status" value="1"/>
</dbReference>
<dbReference type="PANTHER" id="PTHR43790:SF7">
    <property type="entry name" value="GALACTOSE_METHYL GALACTOSIDE IMPORT ATP-BINDING PROTEIN MGLA"/>
    <property type="match status" value="1"/>
</dbReference>
<dbReference type="Pfam" id="PF00005">
    <property type="entry name" value="ABC_tran"/>
    <property type="match status" value="2"/>
</dbReference>
<dbReference type="SMART" id="SM00382">
    <property type="entry name" value="AAA"/>
    <property type="match status" value="2"/>
</dbReference>
<dbReference type="SUPFAM" id="SSF52540">
    <property type="entry name" value="P-loop containing nucleoside triphosphate hydrolases"/>
    <property type="match status" value="2"/>
</dbReference>
<dbReference type="PROSITE" id="PS00211">
    <property type="entry name" value="ABC_TRANSPORTER_1"/>
    <property type="match status" value="1"/>
</dbReference>
<dbReference type="PROSITE" id="PS50893">
    <property type="entry name" value="ABC_TRANSPORTER_2"/>
    <property type="match status" value="2"/>
</dbReference>
<dbReference type="PROSITE" id="PS51260">
    <property type="entry name" value="MGLA"/>
    <property type="match status" value="1"/>
</dbReference>
<sequence>MKDSSNLLEMRNISKEFPGVKALDNVTLKVKKGSVHALMGENGAGKSTLMKCLFGIYHPNSGEIFISGQKVQFKNSKHALDNGVSMVHQELNQVRERNVMDNLWLGRYPKKGLFIDEKKMYDETEKIFKDLDINVNPRDKVSTLSVSQMQMVEIAKAVSYNSKIIVMDEPTSSLTEKEVSHLFKIINKLRKQGISIIYISHKMEEILEISDEVTIMRDGKWIATEKASDLTMDLIIKLMVGRELTDRFPKKDHIPKETILEVNNLSDAKNELKNVSFKLRKGEILGIAGLVGAKRTETLETLFGLREKGSGDIILHGKKVDNSKPFKAMQNGFALVTEERRQTGIFGKLPIDFNSIIANIDSYKTSTGLLANGRISKDTQWVIDSMKVKTPSQKTLIGSLSGGNQQKIVIGKWLLRKPEILLLDEPTRGIDVGAKFEIYQLINELAKEDKGIIMVSSEMPELLGVCDRILVMSNGRVSGIVNANETTQEEIMHLSAKYLSVTGGVNNANQIKEKV</sequence>
<proteinExistence type="inferred from homology"/>
<organism>
    <name type="scientific">Clostridium perfringens (strain ATCC 13124 / DSM 756 / JCM 1290 / NCIMB 6125 / NCTC 8237 / Type A)</name>
    <dbReference type="NCBI Taxonomy" id="195103"/>
    <lineage>
        <taxon>Bacteria</taxon>
        <taxon>Bacillati</taxon>
        <taxon>Bacillota</taxon>
        <taxon>Clostridia</taxon>
        <taxon>Eubacteriales</taxon>
        <taxon>Clostridiaceae</taxon>
        <taxon>Clostridium</taxon>
    </lineage>
</organism>
<comment type="function">
    <text evidence="1">Part of the ABC transporter complex MglABC involved in galactose/methyl galactoside import. Responsible for energy coupling to the transport system.</text>
</comment>
<comment type="catalytic activity">
    <reaction evidence="1">
        <text>D-galactose(out) + ATP + H2O = D-galactose(in) + ADP + phosphate + H(+)</text>
        <dbReference type="Rhea" id="RHEA:60156"/>
        <dbReference type="ChEBI" id="CHEBI:4139"/>
        <dbReference type="ChEBI" id="CHEBI:15377"/>
        <dbReference type="ChEBI" id="CHEBI:15378"/>
        <dbReference type="ChEBI" id="CHEBI:30616"/>
        <dbReference type="ChEBI" id="CHEBI:43474"/>
        <dbReference type="ChEBI" id="CHEBI:456216"/>
        <dbReference type="EC" id="7.5.2.11"/>
    </reaction>
    <physiologicalReaction direction="left-to-right" evidence="1">
        <dbReference type="Rhea" id="RHEA:60157"/>
    </physiologicalReaction>
</comment>
<comment type="catalytic activity">
    <reaction evidence="1">
        <text>methyl beta-D-galactoside(out) + ATP + H2O = methyl beta-D-galactoside(in) + ADP + phosphate + H(+)</text>
        <dbReference type="Rhea" id="RHEA:72531"/>
        <dbReference type="ChEBI" id="CHEBI:15377"/>
        <dbReference type="ChEBI" id="CHEBI:15378"/>
        <dbReference type="ChEBI" id="CHEBI:17540"/>
        <dbReference type="ChEBI" id="CHEBI:30616"/>
        <dbReference type="ChEBI" id="CHEBI:43474"/>
        <dbReference type="ChEBI" id="CHEBI:456216"/>
    </reaction>
    <physiologicalReaction direction="left-to-right" evidence="1">
        <dbReference type="Rhea" id="RHEA:72532"/>
    </physiologicalReaction>
</comment>
<comment type="subunit">
    <text evidence="1">The complex is composed of one ATP-binding protein (MglA), two transmembrane proteins (MglC) and a solute-binding protein (MglB).</text>
</comment>
<comment type="subcellular location">
    <subcellularLocation>
        <location evidence="1">Cell membrane</location>
        <topology evidence="1">Peripheral membrane protein</topology>
    </subcellularLocation>
</comment>
<comment type="similarity">
    <text evidence="1">Belongs to the ABC transporter superfamily. Galactose/methyl galactoside importer (TC 3.A.1.2.3) family.</text>
</comment>